<organism>
    <name type="scientific">Arabidopsis thaliana</name>
    <name type="common">Mouse-ear cress</name>
    <dbReference type="NCBI Taxonomy" id="3702"/>
    <lineage>
        <taxon>Eukaryota</taxon>
        <taxon>Viridiplantae</taxon>
        <taxon>Streptophyta</taxon>
        <taxon>Embryophyta</taxon>
        <taxon>Tracheophyta</taxon>
        <taxon>Spermatophyta</taxon>
        <taxon>Magnoliopsida</taxon>
        <taxon>eudicotyledons</taxon>
        <taxon>Gunneridae</taxon>
        <taxon>Pentapetalae</taxon>
        <taxon>rosids</taxon>
        <taxon>malvids</taxon>
        <taxon>Brassicales</taxon>
        <taxon>Brassicaceae</taxon>
        <taxon>Camelineae</taxon>
        <taxon>Arabidopsis</taxon>
    </lineage>
</organism>
<name>PPR12_ARATH</name>
<accession>Q0WVK7</accession>
<accession>Q9SYK8</accession>
<reference key="1">
    <citation type="journal article" date="2000" name="Nature">
        <title>Sequence and analysis of chromosome 1 of the plant Arabidopsis thaliana.</title>
        <authorList>
            <person name="Theologis A."/>
            <person name="Ecker J.R."/>
            <person name="Palm C.J."/>
            <person name="Federspiel N.A."/>
            <person name="Kaul S."/>
            <person name="White O."/>
            <person name="Alonso J."/>
            <person name="Altafi H."/>
            <person name="Araujo R."/>
            <person name="Bowman C.L."/>
            <person name="Brooks S.Y."/>
            <person name="Buehler E."/>
            <person name="Chan A."/>
            <person name="Chao Q."/>
            <person name="Chen H."/>
            <person name="Cheuk R.F."/>
            <person name="Chin C.W."/>
            <person name="Chung M.K."/>
            <person name="Conn L."/>
            <person name="Conway A.B."/>
            <person name="Conway A.R."/>
            <person name="Creasy T.H."/>
            <person name="Dewar K."/>
            <person name="Dunn P."/>
            <person name="Etgu P."/>
            <person name="Feldblyum T.V."/>
            <person name="Feng J.-D."/>
            <person name="Fong B."/>
            <person name="Fujii C.Y."/>
            <person name="Gill J.E."/>
            <person name="Goldsmith A.D."/>
            <person name="Haas B."/>
            <person name="Hansen N.F."/>
            <person name="Hughes B."/>
            <person name="Huizar L."/>
            <person name="Hunter J.L."/>
            <person name="Jenkins J."/>
            <person name="Johnson-Hopson C."/>
            <person name="Khan S."/>
            <person name="Khaykin E."/>
            <person name="Kim C.J."/>
            <person name="Koo H.L."/>
            <person name="Kremenetskaia I."/>
            <person name="Kurtz D.B."/>
            <person name="Kwan A."/>
            <person name="Lam B."/>
            <person name="Langin-Hooper S."/>
            <person name="Lee A."/>
            <person name="Lee J.M."/>
            <person name="Lenz C.A."/>
            <person name="Li J.H."/>
            <person name="Li Y.-P."/>
            <person name="Lin X."/>
            <person name="Liu S.X."/>
            <person name="Liu Z.A."/>
            <person name="Luros J.S."/>
            <person name="Maiti R."/>
            <person name="Marziali A."/>
            <person name="Militscher J."/>
            <person name="Miranda M."/>
            <person name="Nguyen M."/>
            <person name="Nierman W.C."/>
            <person name="Osborne B.I."/>
            <person name="Pai G."/>
            <person name="Peterson J."/>
            <person name="Pham P.K."/>
            <person name="Rizzo M."/>
            <person name="Rooney T."/>
            <person name="Rowley D."/>
            <person name="Sakano H."/>
            <person name="Salzberg S.L."/>
            <person name="Schwartz J.R."/>
            <person name="Shinn P."/>
            <person name="Southwick A.M."/>
            <person name="Sun H."/>
            <person name="Tallon L.J."/>
            <person name="Tambunga G."/>
            <person name="Toriumi M.J."/>
            <person name="Town C.D."/>
            <person name="Utterback T."/>
            <person name="Van Aken S."/>
            <person name="Vaysberg M."/>
            <person name="Vysotskaia V.S."/>
            <person name="Walker M."/>
            <person name="Wu D."/>
            <person name="Yu G."/>
            <person name="Fraser C.M."/>
            <person name="Venter J.C."/>
            <person name="Davis R.W."/>
        </authorList>
    </citation>
    <scope>NUCLEOTIDE SEQUENCE [LARGE SCALE GENOMIC DNA]</scope>
    <source>
        <strain>cv. Columbia</strain>
    </source>
</reference>
<reference key="2">
    <citation type="journal article" date="2017" name="Plant J.">
        <title>Araport11: a complete reannotation of the Arabidopsis thaliana reference genome.</title>
        <authorList>
            <person name="Cheng C.Y."/>
            <person name="Krishnakumar V."/>
            <person name="Chan A.P."/>
            <person name="Thibaud-Nissen F."/>
            <person name="Schobel S."/>
            <person name="Town C.D."/>
        </authorList>
    </citation>
    <scope>GENOME REANNOTATION</scope>
    <source>
        <strain>cv. Columbia</strain>
    </source>
</reference>
<reference key="3">
    <citation type="submission" date="2006-07" db="EMBL/GenBank/DDBJ databases">
        <title>Large-scale analysis of RIKEN Arabidopsis full-length (RAFL) cDNAs.</title>
        <authorList>
            <person name="Totoki Y."/>
            <person name="Seki M."/>
            <person name="Ishida J."/>
            <person name="Nakajima M."/>
            <person name="Enju A."/>
            <person name="Kamiya A."/>
            <person name="Narusaka M."/>
            <person name="Shin-i T."/>
            <person name="Nakagawa M."/>
            <person name="Sakamoto N."/>
            <person name="Oishi K."/>
            <person name="Kohara Y."/>
            <person name="Kobayashi M."/>
            <person name="Toyoda A."/>
            <person name="Sakaki Y."/>
            <person name="Sakurai T."/>
            <person name="Iida K."/>
            <person name="Akiyama K."/>
            <person name="Satou M."/>
            <person name="Toyoda T."/>
            <person name="Konagaya A."/>
            <person name="Carninci P."/>
            <person name="Kawai J."/>
            <person name="Hayashizaki Y."/>
            <person name="Shinozaki K."/>
        </authorList>
    </citation>
    <scope>NUCLEOTIDE SEQUENCE [LARGE SCALE MRNA]</scope>
    <source>
        <strain>cv. Columbia</strain>
    </source>
</reference>
<reference key="4">
    <citation type="journal article" date="2004" name="Plant Cell">
        <title>Genome-wide analysis of Arabidopsis pentatricopeptide repeat proteins reveals their essential role in organelle biogenesis.</title>
        <authorList>
            <person name="Lurin C."/>
            <person name="Andres C."/>
            <person name="Aubourg S."/>
            <person name="Bellaoui M."/>
            <person name="Bitton F."/>
            <person name="Bruyere C."/>
            <person name="Caboche M."/>
            <person name="Debast C."/>
            <person name="Gualberto J."/>
            <person name="Hoffmann B."/>
            <person name="Lecharny A."/>
            <person name="Le Ret M."/>
            <person name="Martin-Magniette M.-L."/>
            <person name="Mireau H."/>
            <person name="Peeters N."/>
            <person name="Renou J.-P."/>
            <person name="Szurek B."/>
            <person name="Taconnat L."/>
            <person name="Small I."/>
        </authorList>
    </citation>
    <scope>GENE FAMILY</scope>
</reference>
<gene>
    <name type="ordered locus">At1g05670</name>
    <name type="ORF">F3F20.12</name>
</gene>
<dbReference type="EMBL" id="AC007153">
    <property type="protein sequence ID" value="AAD30619.1"/>
    <property type="status" value="ALT_SEQ"/>
    <property type="molecule type" value="Genomic_DNA"/>
</dbReference>
<dbReference type="EMBL" id="CP002684">
    <property type="protein sequence ID" value="AEE27873.1"/>
    <property type="molecule type" value="Genomic_DNA"/>
</dbReference>
<dbReference type="EMBL" id="CP002684">
    <property type="protein sequence ID" value="AEE27874.1"/>
    <property type="molecule type" value="Genomic_DNA"/>
</dbReference>
<dbReference type="EMBL" id="CP002684">
    <property type="protein sequence ID" value="ANM59910.1"/>
    <property type="molecule type" value="Genomic_DNA"/>
</dbReference>
<dbReference type="EMBL" id="AK226740">
    <property type="protein sequence ID" value="BAE98841.1"/>
    <property type="molecule type" value="mRNA"/>
</dbReference>
<dbReference type="PIR" id="H86190">
    <property type="entry name" value="H86190"/>
</dbReference>
<dbReference type="RefSeq" id="NP_001154307.2">
    <property type="nucleotide sequence ID" value="NM_001160835.3"/>
</dbReference>
<dbReference type="RefSeq" id="NP_001318929.1">
    <property type="nucleotide sequence ID" value="NM_001331562.1"/>
</dbReference>
<dbReference type="RefSeq" id="NP_172058.2">
    <property type="nucleotide sequence ID" value="NM_100447.7"/>
</dbReference>
<dbReference type="SMR" id="Q0WVK7"/>
<dbReference type="BioGRID" id="22316">
    <property type="interactions" value="1"/>
</dbReference>
<dbReference type="FunCoup" id="Q0WVK7">
    <property type="interactions" value="98"/>
</dbReference>
<dbReference type="STRING" id="3702.Q0WVK7"/>
<dbReference type="CAZy" id="GT1">
    <property type="family name" value="Glycosyltransferase Family 1"/>
</dbReference>
<dbReference type="iPTMnet" id="Q0WVK7"/>
<dbReference type="PaxDb" id="3702-AT1G05670.2"/>
<dbReference type="EnsemblPlants" id="AT1G05670.1">
    <property type="protein sequence ID" value="AT1G05670.1"/>
    <property type="gene ID" value="AT1G05670"/>
</dbReference>
<dbReference type="EnsemblPlants" id="AT1G05670.2">
    <property type="protein sequence ID" value="AT1G05670.2"/>
    <property type="gene ID" value="AT1G05670"/>
</dbReference>
<dbReference type="EnsemblPlants" id="AT1G05670.3">
    <property type="protein sequence ID" value="AT1G05670.3"/>
    <property type="gene ID" value="AT1G05670"/>
</dbReference>
<dbReference type="GeneID" id="837074"/>
<dbReference type="Gramene" id="AT1G05670.1">
    <property type="protein sequence ID" value="AT1G05670.1"/>
    <property type="gene ID" value="AT1G05670"/>
</dbReference>
<dbReference type="Gramene" id="AT1G05670.2">
    <property type="protein sequence ID" value="AT1G05670.2"/>
    <property type="gene ID" value="AT1G05670"/>
</dbReference>
<dbReference type="Gramene" id="AT1G05670.3">
    <property type="protein sequence ID" value="AT1G05670.3"/>
    <property type="gene ID" value="AT1G05670"/>
</dbReference>
<dbReference type="KEGG" id="ath:AT1G05670"/>
<dbReference type="Araport" id="AT1G05670"/>
<dbReference type="TAIR" id="AT1G05670"/>
<dbReference type="eggNOG" id="KOG4197">
    <property type="taxonomic scope" value="Eukaryota"/>
</dbReference>
<dbReference type="HOGENOM" id="CLU_002706_49_12_1"/>
<dbReference type="InParanoid" id="Q0WVK7"/>
<dbReference type="OMA" id="HEMCSKG"/>
<dbReference type="OrthoDB" id="185373at2759"/>
<dbReference type="PRO" id="PR:Q0WVK7"/>
<dbReference type="Proteomes" id="UP000006548">
    <property type="component" value="Chromosome 1"/>
</dbReference>
<dbReference type="ExpressionAtlas" id="Q0WVK7">
    <property type="expression patterns" value="baseline and differential"/>
</dbReference>
<dbReference type="GO" id="GO:0005783">
    <property type="term" value="C:endoplasmic reticulum"/>
    <property type="evidence" value="ECO:0000314"/>
    <property type="project" value="TAIR"/>
</dbReference>
<dbReference type="GO" id="GO:0005794">
    <property type="term" value="C:Golgi apparatus"/>
    <property type="evidence" value="ECO:0000314"/>
    <property type="project" value="TAIR"/>
</dbReference>
<dbReference type="GO" id="GO:0005739">
    <property type="term" value="C:mitochondrion"/>
    <property type="evidence" value="ECO:0007669"/>
    <property type="project" value="UniProtKB-SubCell"/>
</dbReference>
<dbReference type="FunFam" id="1.25.40.10:FF:000558">
    <property type="entry name" value="Pentatricopeptide repeat-containing protein At5g39710"/>
    <property type="match status" value="2"/>
</dbReference>
<dbReference type="Gene3D" id="1.25.40.10">
    <property type="entry name" value="Tetratricopeptide repeat domain"/>
    <property type="match status" value="6"/>
</dbReference>
<dbReference type="InterPro" id="IPR002885">
    <property type="entry name" value="Pentatricopeptide_rpt"/>
</dbReference>
<dbReference type="InterPro" id="IPR011990">
    <property type="entry name" value="TPR-like_helical_dom_sf"/>
</dbReference>
<dbReference type="NCBIfam" id="TIGR00756">
    <property type="entry name" value="PPR"/>
    <property type="match status" value="13"/>
</dbReference>
<dbReference type="PANTHER" id="PTHR47941">
    <property type="entry name" value="PENTATRICOPEPTIDE REPEAT-CONTAINING PROTEIN 3, MITOCHONDRIAL"/>
    <property type="match status" value="1"/>
</dbReference>
<dbReference type="Pfam" id="PF01535">
    <property type="entry name" value="PPR"/>
    <property type="match status" value="3"/>
</dbReference>
<dbReference type="Pfam" id="PF12854">
    <property type="entry name" value="PPR_1"/>
    <property type="match status" value="1"/>
</dbReference>
<dbReference type="Pfam" id="PF13041">
    <property type="entry name" value="PPR_2"/>
    <property type="match status" value="5"/>
</dbReference>
<dbReference type="SUPFAM" id="SSF81901">
    <property type="entry name" value="HCP-like"/>
    <property type="match status" value="1"/>
</dbReference>
<dbReference type="PROSITE" id="PS51375">
    <property type="entry name" value="PPR"/>
    <property type="match status" value="14"/>
</dbReference>
<keyword id="KW-0496">Mitochondrion</keyword>
<keyword id="KW-1185">Reference proteome</keyword>
<keyword id="KW-0677">Repeat</keyword>
<keyword id="KW-0809">Transit peptide</keyword>
<protein>
    <recommendedName>
        <fullName>Pentatricopeptide repeat-containing protein At1g05670, mitochondrial</fullName>
    </recommendedName>
</protein>
<sequence>MKKPFTGLLMKRGTLSSFRNFIQLFSLQSRGLSFSTLTDTRPFPDYSPKKASVRDTEFVHQITNVIKLRRAEPLRRSLKPYECKFKTDHLIWVLMKIKCDYRLVLDFFDWARSRRDSNLESLCIVIHLAVASKDLKVAQSLISSFWERPKLNVTDSFVQFFDLLVYTYKDWGSDPRVFDVFFQVLVDFGLLREARRVFEKMLNYGLVLSVDSCNVYLTRLSKDCYKTATAIIVFREFPEVGVCWNVASYNIVIHFVCQLGRIKEAHHLLLLMELKGYTPDVISYSTVVNGYCRFGELDKVWKLIEVMKRKGLKPNSYIYGSIIGLLCRICKLAEAEEAFSEMIRQGILPDTVVYTTLIDGFCKRGDIRAASKFFYEMHSRDITPDVLTYTAIISGFCQIGDMVEAGKLFHEMFCKGLEPDSVTFTELINGYCKAGHMKDAFRVHNHMIQAGCSPNVVTYTTLIDGLCKEGDLDSANELLHEMWKIGLQPNIFTYNSIVNGLCKSGNIEEAVKLVGEFEAAGLNADTVTYTTLMDAYCKSGEMDKAQEILKEMLGKGLQPTIVTFNVLMNGFCLHGMLEDGEKLLNWMLAKGIAPNATTFNSLVKQYCIRNNLKAATAIYKDMCSRGVGPDGKTYENLVKGHCKARNMKEAWFLFQEMKGKGFSVSVSTYSVLIKGFLKRKKFLEAREVFDQMRREGLAADKEIFDFFSDTKYKGKRPDTIVDPIDEIIENYLVDEQLRGAN</sequence>
<comment type="subcellular location">
    <subcellularLocation>
        <location evidence="2">Mitochondrion</location>
    </subcellularLocation>
</comment>
<comment type="similarity">
    <text evidence="2">Belongs to the PPR family. P subfamily.</text>
</comment>
<comment type="sequence caution" evidence="2">
    <conflict type="erroneous gene model prediction">
        <sequence resource="EMBL-CDS" id="AAD30619"/>
    </conflict>
    <text>The predicted gene has been split into 2 genes: At1g05670 and At1g05675.</text>
</comment>
<comment type="online information" name="Pentatricopeptide repeat proteins">
    <link uri="https://ppr.plantenergy.uwa.edu.au"/>
</comment>
<proteinExistence type="evidence at transcript level"/>
<feature type="transit peptide" description="Mitochondrion" evidence="1">
    <location>
        <begin position="1"/>
        <end position="21"/>
    </location>
</feature>
<feature type="chain" id="PRO_0000342753" description="Pentatricopeptide repeat-containing protein At1g05670, mitochondrial">
    <location>
        <begin position="22"/>
        <end position="741"/>
    </location>
</feature>
<feature type="repeat" description="PPR 1">
    <location>
        <begin position="174"/>
        <end position="208"/>
    </location>
</feature>
<feature type="repeat" description="PPR 2">
    <location>
        <begin position="209"/>
        <end position="244"/>
    </location>
</feature>
<feature type="repeat" description="PPR 3">
    <location>
        <begin position="245"/>
        <end position="279"/>
    </location>
</feature>
<feature type="repeat" description="PPR 4">
    <location>
        <begin position="280"/>
        <end position="314"/>
    </location>
</feature>
<feature type="repeat" description="PPR 5">
    <location>
        <begin position="315"/>
        <end position="349"/>
    </location>
</feature>
<feature type="repeat" description="PPR 6">
    <location>
        <begin position="350"/>
        <end position="384"/>
    </location>
</feature>
<feature type="repeat" description="PPR 7">
    <location>
        <begin position="385"/>
        <end position="419"/>
    </location>
</feature>
<feature type="repeat" description="PPR 8">
    <location>
        <begin position="420"/>
        <end position="454"/>
    </location>
</feature>
<feature type="repeat" description="PPR 9">
    <location>
        <begin position="455"/>
        <end position="489"/>
    </location>
</feature>
<feature type="repeat" description="PPR 10">
    <location>
        <begin position="490"/>
        <end position="524"/>
    </location>
</feature>
<feature type="repeat" description="PPR 11">
    <location>
        <begin position="525"/>
        <end position="559"/>
    </location>
</feature>
<feature type="repeat" description="PPR 12">
    <location>
        <begin position="560"/>
        <end position="594"/>
    </location>
</feature>
<feature type="repeat" description="PPR 13">
    <location>
        <begin position="595"/>
        <end position="629"/>
    </location>
</feature>
<feature type="repeat" description="PPR 14">
    <location>
        <begin position="630"/>
        <end position="664"/>
    </location>
</feature>
<feature type="repeat" description="PPR 15">
    <location>
        <begin position="665"/>
        <end position="699"/>
    </location>
</feature>
<evidence type="ECO:0000255" key="1"/>
<evidence type="ECO:0000305" key="2"/>